<reference key="1">
    <citation type="journal article" date="2002" name="Nucleic Acids Res.">
        <title>Genome sequence of Oceanobacillus iheyensis isolated from the Iheya Ridge and its unexpected adaptive capabilities to extreme environments.</title>
        <authorList>
            <person name="Takami H."/>
            <person name="Takaki Y."/>
            <person name="Uchiyama I."/>
        </authorList>
    </citation>
    <scope>NUCLEOTIDE SEQUENCE [LARGE SCALE GENOMIC DNA]</scope>
    <source>
        <strain>DSM 14371 / CIP 107618 / JCM 11309 / KCTC 3954 / HTE831</strain>
    </source>
</reference>
<evidence type="ECO:0000255" key="1">
    <source>
        <dbReference type="HAMAP-Rule" id="MF_00148"/>
    </source>
</evidence>
<proteinExistence type="inferred from homology"/>
<keyword id="KW-0963">Cytoplasm</keyword>
<keyword id="KW-0227">DNA damage</keyword>
<keyword id="KW-0234">DNA repair</keyword>
<keyword id="KW-0378">Hydrolase</keyword>
<keyword id="KW-1185">Reference proteome</keyword>
<accession>Q8EPH6</accession>
<feature type="chain" id="PRO_0000176123" description="Uracil-DNA glycosylase">
    <location>
        <begin position="1"/>
        <end position="229"/>
    </location>
</feature>
<feature type="active site" description="Proton acceptor" evidence="1">
    <location>
        <position position="65"/>
    </location>
</feature>
<gene>
    <name evidence="1" type="primary">ung</name>
    <name type="ordered locus">OB2129</name>
</gene>
<comment type="function">
    <text evidence="1">Excises uracil residues from the DNA which can arise as a result of misincorporation of dUMP residues by DNA polymerase or due to deamination of cytosine.</text>
</comment>
<comment type="catalytic activity">
    <reaction evidence="1">
        <text>Hydrolyzes single-stranded DNA or mismatched double-stranded DNA and polynucleotides, releasing free uracil.</text>
        <dbReference type="EC" id="3.2.2.27"/>
    </reaction>
</comment>
<comment type="subcellular location">
    <subcellularLocation>
        <location evidence="1">Cytoplasm</location>
    </subcellularLocation>
</comment>
<comment type="similarity">
    <text evidence="1">Belongs to the uracil-DNA glycosylase (UDG) superfamily. UNG family.</text>
</comment>
<dbReference type="EC" id="3.2.2.27" evidence="1"/>
<dbReference type="EMBL" id="BA000028">
    <property type="protein sequence ID" value="BAC14085.1"/>
    <property type="molecule type" value="Genomic_DNA"/>
</dbReference>
<dbReference type="RefSeq" id="WP_011066523.1">
    <property type="nucleotide sequence ID" value="NC_004193.1"/>
</dbReference>
<dbReference type="SMR" id="Q8EPH6"/>
<dbReference type="STRING" id="221109.gene:10734377"/>
<dbReference type="KEGG" id="oih:OB2129"/>
<dbReference type="eggNOG" id="COG0692">
    <property type="taxonomic scope" value="Bacteria"/>
</dbReference>
<dbReference type="HOGENOM" id="CLU_032162_3_0_9"/>
<dbReference type="OrthoDB" id="9804372at2"/>
<dbReference type="PhylomeDB" id="Q8EPH6"/>
<dbReference type="Proteomes" id="UP000000822">
    <property type="component" value="Chromosome"/>
</dbReference>
<dbReference type="GO" id="GO:0005737">
    <property type="term" value="C:cytoplasm"/>
    <property type="evidence" value="ECO:0007669"/>
    <property type="project" value="UniProtKB-SubCell"/>
</dbReference>
<dbReference type="GO" id="GO:0004844">
    <property type="term" value="F:uracil DNA N-glycosylase activity"/>
    <property type="evidence" value="ECO:0007669"/>
    <property type="project" value="UniProtKB-UniRule"/>
</dbReference>
<dbReference type="GO" id="GO:0097510">
    <property type="term" value="P:base-excision repair, AP site formation via deaminated base removal"/>
    <property type="evidence" value="ECO:0007669"/>
    <property type="project" value="TreeGrafter"/>
</dbReference>
<dbReference type="CDD" id="cd10027">
    <property type="entry name" value="UDG-F1-like"/>
    <property type="match status" value="1"/>
</dbReference>
<dbReference type="FunFam" id="3.40.470.10:FF:000001">
    <property type="entry name" value="Uracil-DNA glycosylase"/>
    <property type="match status" value="1"/>
</dbReference>
<dbReference type="Gene3D" id="3.40.470.10">
    <property type="entry name" value="Uracil-DNA glycosylase-like domain"/>
    <property type="match status" value="1"/>
</dbReference>
<dbReference type="HAMAP" id="MF_00148">
    <property type="entry name" value="UDG"/>
    <property type="match status" value="1"/>
</dbReference>
<dbReference type="InterPro" id="IPR002043">
    <property type="entry name" value="UDG_fam1"/>
</dbReference>
<dbReference type="InterPro" id="IPR018085">
    <property type="entry name" value="Ura-DNA_Glyclase_AS"/>
</dbReference>
<dbReference type="InterPro" id="IPR005122">
    <property type="entry name" value="Uracil-DNA_glycosylase-like"/>
</dbReference>
<dbReference type="InterPro" id="IPR036895">
    <property type="entry name" value="Uracil-DNA_glycosylase-like_sf"/>
</dbReference>
<dbReference type="NCBIfam" id="NF003588">
    <property type="entry name" value="PRK05254.1-1"/>
    <property type="match status" value="1"/>
</dbReference>
<dbReference type="NCBIfam" id="NF003589">
    <property type="entry name" value="PRK05254.1-2"/>
    <property type="match status" value="1"/>
</dbReference>
<dbReference type="NCBIfam" id="NF003591">
    <property type="entry name" value="PRK05254.1-4"/>
    <property type="match status" value="1"/>
</dbReference>
<dbReference type="NCBIfam" id="NF003592">
    <property type="entry name" value="PRK05254.1-5"/>
    <property type="match status" value="1"/>
</dbReference>
<dbReference type="NCBIfam" id="TIGR00628">
    <property type="entry name" value="ung"/>
    <property type="match status" value="1"/>
</dbReference>
<dbReference type="PANTHER" id="PTHR11264">
    <property type="entry name" value="URACIL-DNA GLYCOSYLASE"/>
    <property type="match status" value="1"/>
</dbReference>
<dbReference type="PANTHER" id="PTHR11264:SF0">
    <property type="entry name" value="URACIL-DNA GLYCOSYLASE"/>
    <property type="match status" value="1"/>
</dbReference>
<dbReference type="Pfam" id="PF03167">
    <property type="entry name" value="UDG"/>
    <property type="match status" value="1"/>
</dbReference>
<dbReference type="SMART" id="SM00986">
    <property type="entry name" value="UDG"/>
    <property type="match status" value="1"/>
</dbReference>
<dbReference type="SMART" id="SM00987">
    <property type="entry name" value="UreE_C"/>
    <property type="match status" value="1"/>
</dbReference>
<dbReference type="SUPFAM" id="SSF52141">
    <property type="entry name" value="Uracil-DNA glycosylase-like"/>
    <property type="match status" value="1"/>
</dbReference>
<dbReference type="PROSITE" id="PS00130">
    <property type="entry name" value="U_DNA_GLYCOSYLASE"/>
    <property type="match status" value="1"/>
</dbReference>
<sequence>MENPLYNDWSLLLEDEFKKDYYLRLRSFLKKEYTEEKIHPAMEDIFNALHFTPFHKVKVVILGQDPYHGPDQAHGLSFSVQPGITIPPSLKNIFKELTHEFGMSMPTHGHLTHWAKQGVLLLNNVLTVREGKAHSHRGQGWEVFTDKVIQTLNQKDHPVVFLLWGGAAQKKGELIDTNKHIILKAPHPSPLSAYRGFFESNHFSKANQILHKNNVEEIDWTLPESPSQG</sequence>
<name>UNG_OCEIH</name>
<organism>
    <name type="scientific">Oceanobacillus iheyensis (strain DSM 14371 / CIP 107618 / JCM 11309 / KCTC 3954 / HTE831)</name>
    <dbReference type="NCBI Taxonomy" id="221109"/>
    <lineage>
        <taxon>Bacteria</taxon>
        <taxon>Bacillati</taxon>
        <taxon>Bacillota</taxon>
        <taxon>Bacilli</taxon>
        <taxon>Bacillales</taxon>
        <taxon>Bacillaceae</taxon>
        <taxon>Oceanobacillus</taxon>
    </lineage>
</organism>
<protein>
    <recommendedName>
        <fullName evidence="1">Uracil-DNA glycosylase</fullName>
        <shortName evidence="1">UDG</shortName>
        <ecNumber evidence="1">3.2.2.27</ecNumber>
    </recommendedName>
</protein>